<accession>B9E4U5</accession>
<reference key="1">
    <citation type="submission" date="2005-09" db="EMBL/GenBank/DDBJ databases">
        <title>Complete genome sequence of Clostridium kluyveri and comparative genomics of Clostridia species.</title>
        <authorList>
            <person name="Inui M."/>
            <person name="Nonaka H."/>
            <person name="Shinoda Y."/>
            <person name="Ikenaga Y."/>
            <person name="Abe M."/>
            <person name="Naito K."/>
            <person name="Vertes A.A."/>
            <person name="Yukawa H."/>
        </authorList>
    </citation>
    <scope>NUCLEOTIDE SEQUENCE [LARGE SCALE GENOMIC DNA]</scope>
    <source>
        <strain>NBRC 12016</strain>
    </source>
</reference>
<protein>
    <recommendedName>
        <fullName evidence="1">Deoxyribose-phosphate aldolase</fullName>
        <shortName evidence="1">DERA</shortName>
        <ecNumber evidence="1">4.1.2.4</ecNumber>
    </recommendedName>
    <alternativeName>
        <fullName evidence="1">2-deoxy-D-ribose 5-phosphate aldolase</fullName>
    </alternativeName>
    <alternativeName>
        <fullName evidence="1">Phosphodeoxyriboaldolase</fullName>
        <shortName evidence="1">Deoxyriboaldolase</shortName>
    </alternativeName>
</protein>
<keyword id="KW-0963">Cytoplasm</keyword>
<keyword id="KW-0456">Lyase</keyword>
<keyword id="KW-0704">Schiff base</keyword>
<dbReference type="EC" id="4.1.2.4" evidence="1"/>
<dbReference type="EMBL" id="AP009049">
    <property type="protein sequence ID" value="BAH07520.1"/>
    <property type="molecule type" value="Genomic_DNA"/>
</dbReference>
<dbReference type="RefSeq" id="WP_012103118.1">
    <property type="nucleotide sequence ID" value="NC_011837.1"/>
</dbReference>
<dbReference type="SMR" id="B9E4U5"/>
<dbReference type="KEGG" id="ckr:CKR_2469"/>
<dbReference type="HOGENOM" id="CLU_053595_0_2_9"/>
<dbReference type="UniPathway" id="UPA00002">
    <property type="reaction ID" value="UER00468"/>
</dbReference>
<dbReference type="Proteomes" id="UP000007969">
    <property type="component" value="Chromosome"/>
</dbReference>
<dbReference type="GO" id="GO:0005737">
    <property type="term" value="C:cytoplasm"/>
    <property type="evidence" value="ECO:0007669"/>
    <property type="project" value="UniProtKB-SubCell"/>
</dbReference>
<dbReference type="GO" id="GO:0004139">
    <property type="term" value="F:deoxyribose-phosphate aldolase activity"/>
    <property type="evidence" value="ECO:0007669"/>
    <property type="project" value="UniProtKB-UniRule"/>
</dbReference>
<dbReference type="GO" id="GO:0006018">
    <property type="term" value="P:2-deoxyribose 1-phosphate catabolic process"/>
    <property type="evidence" value="ECO:0007669"/>
    <property type="project" value="UniProtKB-UniRule"/>
</dbReference>
<dbReference type="GO" id="GO:0016052">
    <property type="term" value="P:carbohydrate catabolic process"/>
    <property type="evidence" value="ECO:0007669"/>
    <property type="project" value="TreeGrafter"/>
</dbReference>
<dbReference type="GO" id="GO:0009264">
    <property type="term" value="P:deoxyribonucleotide catabolic process"/>
    <property type="evidence" value="ECO:0007669"/>
    <property type="project" value="InterPro"/>
</dbReference>
<dbReference type="CDD" id="cd00959">
    <property type="entry name" value="DeoC"/>
    <property type="match status" value="1"/>
</dbReference>
<dbReference type="FunFam" id="3.20.20.70:FF:000044">
    <property type="entry name" value="Deoxyribose-phosphate aldolase"/>
    <property type="match status" value="1"/>
</dbReference>
<dbReference type="Gene3D" id="3.20.20.70">
    <property type="entry name" value="Aldolase class I"/>
    <property type="match status" value="1"/>
</dbReference>
<dbReference type="HAMAP" id="MF_00114">
    <property type="entry name" value="DeoC_type1"/>
    <property type="match status" value="1"/>
</dbReference>
<dbReference type="InterPro" id="IPR013785">
    <property type="entry name" value="Aldolase_TIM"/>
</dbReference>
<dbReference type="InterPro" id="IPR011343">
    <property type="entry name" value="DeoC"/>
</dbReference>
<dbReference type="InterPro" id="IPR002915">
    <property type="entry name" value="DeoC/FbaB/LacD_aldolase"/>
</dbReference>
<dbReference type="InterPro" id="IPR028581">
    <property type="entry name" value="DeoC_typeI"/>
</dbReference>
<dbReference type="NCBIfam" id="TIGR00126">
    <property type="entry name" value="deoC"/>
    <property type="match status" value="1"/>
</dbReference>
<dbReference type="PANTHER" id="PTHR10889">
    <property type="entry name" value="DEOXYRIBOSE-PHOSPHATE ALDOLASE"/>
    <property type="match status" value="1"/>
</dbReference>
<dbReference type="PANTHER" id="PTHR10889:SF1">
    <property type="entry name" value="DEOXYRIBOSE-PHOSPHATE ALDOLASE"/>
    <property type="match status" value="1"/>
</dbReference>
<dbReference type="Pfam" id="PF01791">
    <property type="entry name" value="DeoC"/>
    <property type="match status" value="1"/>
</dbReference>
<dbReference type="PIRSF" id="PIRSF001357">
    <property type="entry name" value="DeoC"/>
    <property type="match status" value="1"/>
</dbReference>
<dbReference type="SMART" id="SM01133">
    <property type="entry name" value="DeoC"/>
    <property type="match status" value="1"/>
</dbReference>
<dbReference type="SUPFAM" id="SSF51569">
    <property type="entry name" value="Aldolase"/>
    <property type="match status" value="1"/>
</dbReference>
<name>DEOC_CLOK1</name>
<gene>
    <name evidence="1" type="primary">deoC</name>
    <name type="ordered locus">CKR_2469</name>
</gene>
<sequence>MDKKELAKMIDHTLLKPEANYEQIVKLCKEALEYGFASVCINPCYVNAAYQLLKGSDVKVCTVVGFPLGAATSETKTFEAVQAVNRGASEIDMVINVGYLKSGNHDYVEEDIKTLVNKINGRALVKVIIETCLLNDEEKIIACKLAKKAGAHFVKTSTGFNMSGATSEDVALMYDAVSPNLKVKASGGIRTYEDAIKMINAGASRIGASSSIKIINKK</sequence>
<feature type="chain" id="PRO_1000119173" description="Deoxyribose-phosphate aldolase">
    <location>
        <begin position="1"/>
        <end position="218"/>
    </location>
</feature>
<feature type="active site" description="Proton donor/acceptor" evidence="1">
    <location>
        <position position="92"/>
    </location>
</feature>
<feature type="active site" description="Schiff-base intermediate with acetaldehyde" evidence="1">
    <location>
        <position position="155"/>
    </location>
</feature>
<feature type="active site" description="Proton donor/acceptor" evidence="1">
    <location>
        <position position="184"/>
    </location>
</feature>
<comment type="function">
    <text evidence="1">Catalyzes a reversible aldol reaction between acetaldehyde and D-glyceraldehyde 3-phosphate to generate 2-deoxy-D-ribose 5-phosphate.</text>
</comment>
<comment type="catalytic activity">
    <reaction evidence="1">
        <text>2-deoxy-D-ribose 5-phosphate = D-glyceraldehyde 3-phosphate + acetaldehyde</text>
        <dbReference type="Rhea" id="RHEA:12821"/>
        <dbReference type="ChEBI" id="CHEBI:15343"/>
        <dbReference type="ChEBI" id="CHEBI:59776"/>
        <dbReference type="ChEBI" id="CHEBI:62877"/>
        <dbReference type="EC" id="4.1.2.4"/>
    </reaction>
</comment>
<comment type="pathway">
    <text evidence="1">Carbohydrate degradation; 2-deoxy-D-ribose 1-phosphate degradation; D-glyceraldehyde 3-phosphate and acetaldehyde from 2-deoxy-alpha-D-ribose 1-phosphate: step 2/2.</text>
</comment>
<comment type="subcellular location">
    <subcellularLocation>
        <location evidence="1">Cytoplasm</location>
    </subcellularLocation>
</comment>
<comment type="similarity">
    <text evidence="1">Belongs to the DeoC/FbaB aldolase family. DeoC type 1 subfamily.</text>
</comment>
<evidence type="ECO:0000255" key="1">
    <source>
        <dbReference type="HAMAP-Rule" id="MF_00114"/>
    </source>
</evidence>
<proteinExistence type="inferred from homology"/>
<organism>
    <name type="scientific">Clostridium kluyveri (strain NBRC 12016)</name>
    <dbReference type="NCBI Taxonomy" id="583346"/>
    <lineage>
        <taxon>Bacteria</taxon>
        <taxon>Bacillati</taxon>
        <taxon>Bacillota</taxon>
        <taxon>Clostridia</taxon>
        <taxon>Eubacteriales</taxon>
        <taxon>Clostridiaceae</taxon>
        <taxon>Clostridium</taxon>
    </lineage>
</organism>